<feature type="chain" id="PRO_0000147114" description="Large ribosomal subunit protein uL16">
    <location>
        <begin position="1"/>
        <end position="218"/>
    </location>
</feature>
<feature type="sequence conflict" description="In Ref. 5; AAO39584." evidence="2" ref="5">
    <location>
        <begin position="73"/>
        <end position="99"/>
    </location>
</feature>
<proteinExistence type="evidence at protein level"/>
<organism>
    <name type="scientific">Drosophila melanogaster</name>
    <name type="common">Fruit fly</name>
    <dbReference type="NCBI Taxonomy" id="7227"/>
    <lineage>
        <taxon>Eukaryota</taxon>
        <taxon>Metazoa</taxon>
        <taxon>Ecdysozoa</taxon>
        <taxon>Arthropoda</taxon>
        <taxon>Hexapoda</taxon>
        <taxon>Insecta</taxon>
        <taxon>Pterygota</taxon>
        <taxon>Neoptera</taxon>
        <taxon>Endopterygota</taxon>
        <taxon>Diptera</taxon>
        <taxon>Brachycera</taxon>
        <taxon>Muscomorpha</taxon>
        <taxon>Ephydroidea</taxon>
        <taxon>Drosophilidae</taxon>
        <taxon>Drosophila</taxon>
        <taxon>Sophophora</taxon>
    </lineage>
</organism>
<dbReference type="EMBL" id="U49721">
    <property type="protein sequence ID" value="AAC16108.1"/>
    <property type="molecule type" value="mRNA"/>
</dbReference>
<dbReference type="EMBL" id="AE014296">
    <property type="protein sequence ID" value="AAF45440.3"/>
    <property type="molecule type" value="Genomic_DNA"/>
</dbReference>
<dbReference type="EMBL" id="AE014296">
    <property type="protein sequence ID" value="AAG22453.4"/>
    <property type="molecule type" value="Genomic_DNA"/>
</dbReference>
<dbReference type="EMBL" id="AY070910">
    <property type="protein sequence ID" value="AAL48532.1"/>
    <property type="molecule type" value="mRNA"/>
</dbReference>
<dbReference type="EMBL" id="BT003580">
    <property type="protein sequence ID" value="AAO39584.1"/>
    <property type="status" value="ALT_INIT"/>
    <property type="molecule type" value="mRNA"/>
</dbReference>
<dbReference type="RefSeq" id="NP_001262233.1">
    <property type="nucleotide sequence ID" value="NM_001275304.1"/>
</dbReference>
<dbReference type="RefSeq" id="NP_651954.3">
    <property type="nucleotide sequence ID" value="NM_143697.5"/>
</dbReference>
<dbReference type="RefSeq" id="NP_730773.4">
    <property type="nucleotide sequence ID" value="NM_168984.5"/>
</dbReference>
<dbReference type="PDB" id="4V6W">
    <property type="method" value="EM"/>
    <property type="resolution" value="6.00 A"/>
    <property type="chains" value="CI=1-218"/>
</dbReference>
<dbReference type="PDB" id="6XU6">
    <property type="method" value="EM"/>
    <property type="resolution" value="3.50 A"/>
    <property type="chains" value="CI=2-218"/>
</dbReference>
<dbReference type="PDB" id="6XU7">
    <property type="method" value="EM"/>
    <property type="resolution" value="4.90 A"/>
    <property type="chains" value="CI=2-218"/>
</dbReference>
<dbReference type="PDB" id="6XU8">
    <property type="method" value="EM"/>
    <property type="resolution" value="3.00 A"/>
    <property type="chains" value="CI=2-218"/>
</dbReference>
<dbReference type="PDBsum" id="4V6W"/>
<dbReference type="PDBsum" id="6XU6"/>
<dbReference type="PDBsum" id="6XU7"/>
<dbReference type="PDBsum" id="6XU8"/>
<dbReference type="EMDB" id="EMD-10622"/>
<dbReference type="EMDB" id="EMD-10623"/>
<dbReference type="EMDB" id="EMD-10624"/>
<dbReference type="SMR" id="O61231"/>
<dbReference type="BioGRID" id="68678">
    <property type="interactions" value="115"/>
</dbReference>
<dbReference type="DIP" id="DIP-18809N"/>
<dbReference type="FunCoup" id="O61231">
    <property type="interactions" value="907"/>
</dbReference>
<dbReference type="IntAct" id="O61231">
    <property type="interactions" value="3"/>
</dbReference>
<dbReference type="MINT" id="O61231"/>
<dbReference type="STRING" id="7227.FBpp0306039"/>
<dbReference type="PaxDb" id="7227-FBpp0306039"/>
<dbReference type="DNASU" id="43864"/>
<dbReference type="EnsemblMetazoa" id="FBtr0299869">
    <property type="protein sequence ID" value="FBpp0289147"/>
    <property type="gene ID" value="FBgn0024733"/>
</dbReference>
<dbReference type="EnsemblMetazoa" id="FBtr0299870">
    <property type="protein sequence ID" value="FBpp0289148"/>
    <property type="gene ID" value="FBgn0024733"/>
</dbReference>
<dbReference type="EnsemblMetazoa" id="FBtr0333910">
    <property type="protein sequence ID" value="FBpp0306039"/>
    <property type="gene ID" value="FBgn0024733"/>
</dbReference>
<dbReference type="GeneID" id="43864"/>
<dbReference type="KEGG" id="dme:Dmel_CG17521"/>
<dbReference type="AGR" id="FB:FBgn0024733"/>
<dbReference type="CTD" id="6134"/>
<dbReference type="FlyBase" id="FBgn0024733">
    <property type="gene designation" value="RpL10"/>
</dbReference>
<dbReference type="VEuPathDB" id="VectorBase:FBgn0024733"/>
<dbReference type="eggNOG" id="KOG0857">
    <property type="taxonomic scope" value="Eukaryota"/>
</dbReference>
<dbReference type="GeneTree" id="ENSGT00390000003897"/>
<dbReference type="HOGENOM" id="CLU_084051_0_0_1"/>
<dbReference type="InParanoid" id="O61231"/>
<dbReference type="OMA" id="HHVIREN"/>
<dbReference type="OrthoDB" id="10258869at2759"/>
<dbReference type="PhylomeDB" id="O61231"/>
<dbReference type="Reactome" id="R-DME-156827">
    <property type="pathway name" value="L13a-mediated translational silencing of Ceruloplasmin expression"/>
</dbReference>
<dbReference type="Reactome" id="R-DME-1799339">
    <property type="pathway name" value="SRP-dependent cotranslational protein targeting to membrane"/>
</dbReference>
<dbReference type="Reactome" id="R-DME-72689">
    <property type="pathway name" value="Formation of a pool of free 40S subunits"/>
</dbReference>
<dbReference type="Reactome" id="R-DME-72706">
    <property type="pathway name" value="GTP hydrolysis and joining of the 60S ribosomal subunit"/>
</dbReference>
<dbReference type="Reactome" id="R-DME-975956">
    <property type="pathway name" value="Nonsense Mediated Decay (NMD) independent of the Exon Junction Complex (EJC)"/>
</dbReference>
<dbReference type="Reactome" id="R-DME-975957">
    <property type="pathway name" value="Nonsense Mediated Decay (NMD) enhanced by the Exon Junction Complex (EJC)"/>
</dbReference>
<dbReference type="SignaLink" id="O61231"/>
<dbReference type="BioGRID-ORCS" id="43864">
    <property type="hits" value="1 hit in 3 CRISPR screens"/>
</dbReference>
<dbReference type="ChiTaRS" id="RpL10">
    <property type="organism name" value="fly"/>
</dbReference>
<dbReference type="GenomeRNAi" id="43864"/>
<dbReference type="PRO" id="PR:O61231"/>
<dbReference type="Proteomes" id="UP000000803">
    <property type="component" value="Chromosome 3L"/>
</dbReference>
<dbReference type="Bgee" id="FBgn0024733">
    <property type="expression patterns" value="Expressed in embryonic/larval hemocyte (Drosophila) and 281 other cell types or tissues"/>
</dbReference>
<dbReference type="ExpressionAtlas" id="O61231">
    <property type="expression patterns" value="baseline and differential"/>
</dbReference>
<dbReference type="GO" id="GO:0005737">
    <property type="term" value="C:cytoplasm"/>
    <property type="evidence" value="ECO:0000314"/>
    <property type="project" value="FlyBase"/>
</dbReference>
<dbReference type="GO" id="GO:0022625">
    <property type="term" value="C:cytosolic large ribosomal subunit"/>
    <property type="evidence" value="ECO:0000318"/>
    <property type="project" value="GO_Central"/>
</dbReference>
<dbReference type="GO" id="GO:0022626">
    <property type="term" value="C:cytosolic ribosome"/>
    <property type="evidence" value="ECO:0000314"/>
    <property type="project" value="FlyBase"/>
</dbReference>
<dbReference type="GO" id="GO:0043025">
    <property type="term" value="C:neuronal cell body"/>
    <property type="evidence" value="ECO:0000314"/>
    <property type="project" value="FlyBase"/>
</dbReference>
<dbReference type="GO" id="GO:0003735">
    <property type="term" value="F:structural constituent of ribosome"/>
    <property type="evidence" value="ECO:0000314"/>
    <property type="project" value="FlyBase"/>
</dbReference>
<dbReference type="GO" id="GO:0002181">
    <property type="term" value="P:cytoplasmic translation"/>
    <property type="evidence" value="ECO:0000304"/>
    <property type="project" value="FlyBase"/>
</dbReference>
<dbReference type="GO" id="GO:0006412">
    <property type="term" value="P:translation"/>
    <property type="evidence" value="ECO:0000318"/>
    <property type="project" value="GO_Central"/>
</dbReference>
<dbReference type="CDD" id="cd01433">
    <property type="entry name" value="Ribosomal_L16_L10e"/>
    <property type="match status" value="1"/>
</dbReference>
<dbReference type="FunFam" id="3.90.1170.10:FF:000002">
    <property type="entry name" value="60S ribosomal protein L10"/>
    <property type="match status" value="1"/>
</dbReference>
<dbReference type="Gene3D" id="3.90.1170.10">
    <property type="entry name" value="Ribosomal protein L10e/L16"/>
    <property type="match status" value="1"/>
</dbReference>
<dbReference type="InterPro" id="IPR047873">
    <property type="entry name" value="Ribosomal_uL16"/>
</dbReference>
<dbReference type="InterPro" id="IPR018255">
    <property type="entry name" value="Ribosomal_uL16_CS_euk_arc"/>
</dbReference>
<dbReference type="InterPro" id="IPR016180">
    <property type="entry name" value="Ribosomal_uL16_dom"/>
</dbReference>
<dbReference type="InterPro" id="IPR001197">
    <property type="entry name" value="Ribosomal_uL16_euk_arch"/>
</dbReference>
<dbReference type="InterPro" id="IPR036920">
    <property type="entry name" value="Ribosomal_uL16_sf"/>
</dbReference>
<dbReference type="NCBIfam" id="NF003239">
    <property type="entry name" value="PRK04199.1-4"/>
    <property type="match status" value="1"/>
</dbReference>
<dbReference type="NCBIfam" id="TIGR00279">
    <property type="entry name" value="uL16_euk_arch"/>
    <property type="match status" value="1"/>
</dbReference>
<dbReference type="PANTHER" id="PTHR11726">
    <property type="entry name" value="60S RIBOSOMAL PROTEIN L10"/>
    <property type="match status" value="1"/>
</dbReference>
<dbReference type="Pfam" id="PF00252">
    <property type="entry name" value="Ribosomal_L16"/>
    <property type="match status" value="1"/>
</dbReference>
<dbReference type="PIRSF" id="PIRSF005590">
    <property type="entry name" value="Ribosomal_L10"/>
    <property type="match status" value="1"/>
</dbReference>
<dbReference type="SUPFAM" id="SSF54686">
    <property type="entry name" value="Ribosomal protein L16p/L10e"/>
    <property type="match status" value="1"/>
</dbReference>
<dbReference type="PROSITE" id="PS01257">
    <property type="entry name" value="RIBOSOMAL_L10E"/>
    <property type="match status" value="1"/>
</dbReference>
<keyword id="KW-0002">3D-structure</keyword>
<keyword id="KW-1185">Reference proteome</keyword>
<keyword id="KW-0687">Ribonucleoprotein</keyword>
<keyword id="KW-0689">Ribosomal protein</keyword>
<protein>
    <recommendedName>
        <fullName evidence="2">Large ribosomal subunit protein uL16</fullName>
    </recommendedName>
    <alternativeName>
        <fullName>60S ribosomal protein L10</fullName>
    </alternativeName>
    <alternativeName>
        <fullName>QM protein homolog</fullName>
    </alternativeName>
    <alternativeName>
        <fullName>dQM</fullName>
    </alternativeName>
</protein>
<comment type="subunit">
    <text evidence="1">Component of the large ribosomal subunit. Mature ribosomes consist of a small (40S) and a large (60S) subunit. The 40S subunit contains about 33 different proteins and 1 molecule of RNA (18S). The 60S subunit contains about 49 different proteins and 3 molecules of RNA (28S, 5.8S and 5S) (By similarity).</text>
</comment>
<comment type="similarity">
    <text evidence="2">Belongs to the universal ribosomal protein uL16 family.</text>
</comment>
<comment type="sequence caution" evidence="2">
    <conflict type="erroneous initiation">
        <sequence resource="EMBL-CDS" id="AAO39584"/>
    </conflict>
    <text>Extended N-terminus.</text>
</comment>
<gene>
    <name type="primary">RpL10</name>
    <name type="synonym">Qm</name>
    <name type="ORF">CG17521</name>
</gene>
<reference key="1">
    <citation type="journal article" date="1997" name="DNA Seq.">
        <title>The isolation, localization and characterization of the QM homolog in Drosophila melanogaster.</title>
        <authorList>
            <person name="Nguyen-Yue Y.H."/>
            <person name="Loftus T.M."/>
            <person name="Torok T."/>
            <person name="Bryant P."/>
            <person name="Stanbridge E.J."/>
        </authorList>
    </citation>
    <scope>NUCLEOTIDE SEQUENCE [MRNA]</scope>
    <source>
        <tissue>CNS</tissue>
    </source>
</reference>
<reference key="2">
    <citation type="journal article" date="2000" name="Science">
        <title>The genome sequence of Drosophila melanogaster.</title>
        <authorList>
            <person name="Adams M.D."/>
            <person name="Celniker S.E."/>
            <person name="Holt R.A."/>
            <person name="Evans C.A."/>
            <person name="Gocayne J.D."/>
            <person name="Amanatides P.G."/>
            <person name="Scherer S.E."/>
            <person name="Li P.W."/>
            <person name="Hoskins R.A."/>
            <person name="Galle R.F."/>
            <person name="George R.A."/>
            <person name="Lewis S.E."/>
            <person name="Richards S."/>
            <person name="Ashburner M."/>
            <person name="Henderson S.N."/>
            <person name="Sutton G.G."/>
            <person name="Wortman J.R."/>
            <person name="Yandell M.D."/>
            <person name="Zhang Q."/>
            <person name="Chen L.X."/>
            <person name="Brandon R.C."/>
            <person name="Rogers Y.-H.C."/>
            <person name="Blazej R.G."/>
            <person name="Champe M."/>
            <person name="Pfeiffer B.D."/>
            <person name="Wan K.H."/>
            <person name="Doyle C."/>
            <person name="Baxter E.G."/>
            <person name="Helt G."/>
            <person name="Nelson C.R."/>
            <person name="Miklos G.L.G."/>
            <person name="Abril J.F."/>
            <person name="Agbayani A."/>
            <person name="An H.-J."/>
            <person name="Andrews-Pfannkoch C."/>
            <person name="Baldwin D."/>
            <person name="Ballew R.M."/>
            <person name="Basu A."/>
            <person name="Baxendale J."/>
            <person name="Bayraktaroglu L."/>
            <person name="Beasley E.M."/>
            <person name="Beeson K.Y."/>
            <person name="Benos P.V."/>
            <person name="Berman B.P."/>
            <person name="Bhandari D."/>
            <person name="Bolshakov S."/>
            <person name="Borkova D."/>
            <person name="Botchan M.R."/>
            <person name="Bouck J."/>
            <person name="Brokstein P."/>
            <person name="Brottier P."/>
            <person name="Burtis K.C."/>
            <person name="Busam D.A."/>
            <person name="Butler H."/>
            <person name="Cadieu E."/>
            <person name="Center A."/>
            <person name="Chandra I."/>
            <person name="Cherry J.M."/>
            <person name="Cawley S."/>
            <person name="Dahlke C."/>
            <person name="Davenport L.B."/>
            <person name="Davies P."/>
            <person name="de Pablos B."/>
            <person name="Delcher A."/>
            <person name="Deng Z."/>
            <person name="Mays A.D."/>
            <person name="Dew I."/>
            <person name="Dietz S.M."/>
            <person name="Dodson K."/>
            <person name="Doup L.E."/>
            <person name="Downes M."/>
            <person name="Dugan-Rocha S."/>
            <person name="Dunkov B.C."/>
            <person name="Dunn P."/>
            <person name="Durbin K.J."/>
            <person name="Evangelista C.C."/>
            <person name="Ferraz C."/>
            <person name="Ferriera S."/>
            <person name="Fleischmann W."/>
            <person name="Fosler C."/>
            <person name="Gabrielian A.E."/>
            <person name="Garg N.S."/>
            <person name="Gelbart W.M."/>
            <person name="Glasser K."/>
            <person name="Glodek A."/>
            <person name="Gong F."/>
            <person name="Gorrell J.H."/>
            <person name="Gu Z."/>
            <person name="Guan P."/>
            <person name="Harris M."/>
            <person name="Harris N.L."/>
            <person name="Harvey D.A."/>
            <person name="Heiman T.J."/>
            <person name="Hernandez J.R."/>
            <person name="Houck J."/>
            <person name="Hostin D."/>
            <person name="Houston K.A."/>
            <person name="Howland T.J."/>
            <person name="Wei M.-H."/>
            <person name="Ibegwam C."/>
            <person name="Jalali M."/>
            <person name="Kalush F."/>
            <person name="Karpen G.H."/>
            <person name="Ke Z."/>
            <person name="Kennison J.A."/>
            <person name="Ketchum K.A."/>
            <person name="Kimmel B.E."/>
            <person name="Kodira C.D."/>
            <person name="Kraft C.L."/>
            <person name="Kravitz S."/>
            <person name="Kulp D."/>
            <person name="Lai Z."/>
            <person name="Lasko P."/>
            <person name="Lei Y."/>
            <person name="Levitsky A.A."/>
            <person name="Li J.H."/>
            <person name="Li Z."/>
            <person name="Liang Y."/>
            <person name="Lin X."/>
            <person name="Liu X."/>
            <person name="Mattei B."/>
            <person name="McIntosh T.C."/>
            <person name="McLeod M.P."/>
            <person name="McPherson D."/>
            <person name="Merkulov G."/>
            <person name="Milshina N.V."/>
            <person name="Mobarry C."/>
            <person name="Morris J."/>
            <person name="Moshrefi A."/>
            <person name="Mount S.M."/>
            <person name="Moy M."/>
            <person name="Murphy B."/>
            <person name="Murphy L."/>
            <person name="Muzny D.M."/>
            <person name="Nelson D.L."/>
            <person name="Nelson D.R."/>
            <person name="Nelson K.A."/>
            <person name="Nixon K."/>
            <person name="Nusskern D.R."/>
            <person name="Pacleb J.M."/>
            <person name="Palazzolo M."/>
            <person name="Pittman G.S."/>
            <person name="Pan S."/>
            <person name="Pollard J."/>
            <person name="Puri V."/>
            <person name="Reese M.G."/>
            <person name="Reinert K."/>
            <person name="Remington K."/>
            <person name="Saunders R.D.C."/>
            <person name="Scheeler F."/>
            <person name="Shen H."/>
            <person name="Shue B.C."/>
            <person name="Siden-Kiamos I."/>
            <person name="Simpson M."/>
            <person name="Skupski M.P."/>
            <person name="Smith T.J."/>
            <person name="Spier E."/>
            <person name="Spradling A.C."/>
            <person name="Stapleton M."/>
            <person name="Strong R."/>
            <person name="Sun E."/>
            <person name="Svirskas R."/>
            <person name="Tector C."/>
            <person name="Turner R."/>
            <person name="Venter E."/>
            <person name="Wang A.H."/>
            <person name="Wang X."/>
            <person name="Wang Z.-Y."/>
            <person name="Wassarman D.A."/>
            <person name="Weinstock G.M."/>
            <person name="Weissenbach J."/>
            <person name="Williams S.M."/>
            <person name="Woodage T."/>
            <person name="Worley K.C."/>
            <person name="Wu D."/>
            <person name="Yang S."/>
            <person name="Yao Q.A."/>
            <person name="Ye J."/>
            <person name="Yeh R.-F."/>
            <person name="Zaveri J.S."/>
            <person name="Zhan M."/>
            <person name="Zhang G."/>
            <person name="Zhao Q."/>
            <person name="Zheng L."/>
            <person name="Zheng X.H."/>
            <person name="Zhong F.N."/>
            <person name="Zhong W."/>
            <person name="Zhou X."/>
            <person name="Zhu S.C."/>
            <person name="Zhu X."/>
            <person name="Smith H.O."/>
            <person name="Gibbs R.A."/>
            <person name="Myers E.W."/>
            <person name="Rubin G.M."/>
            <person name="Venter J.C."/>
        </authorList>
    </citation>
    <scope>NUCLEOTIDE SEQUENCE [LARGE SCALE GENOMIC DNA]</scope>
    <source>
        <strain>Berkeley</strain>
    </source>
</reference>
<reference key="3">
    <citation type="journal article" date="2002" name="Genome Biol.">
        <title>Annotation of the Drosophila melanogaster euchromatic genome: a systematic review.</title>
        <authorList>
            <person name="Misra S."/>
            <person name="Crosby M.A."/>
            <person name="Mungall C.J."/>
            <person name="Matthews B.B."/>
            <person name="Campbell K.S."/>
            <person name="Hradecky P."/>
            <person name="Huang Y."/>
            <person name="Kaminker J.S."/>
            <person name="Millburn G.H."/>
            <person name="Prochnik S.E."/>
            <person name="Smith C.D."/>
            <person name="Tupy J.L."/>
            <person name="Whitfield E.J."/>
            <person name="Bayraktaroglu L."/>
            <person name="Berman B.P."/>
            <person name="Bettencourt B.R."/>
            <person name="Celniker S.E."/>
            <person name="de Grey A.D.N.J."/>
            <person name="Drysdale R.A."/>
            <person name="Harris N.L."/>
            <person name="Richter J."/>
            <person name="Russo S."/>
            <person name="Schroeder A.J."/>
            <person name="Shu S.Q."/>
            <person name="Stapleton M."/>
            <person name="Yamada C."/>
            <person name="Ashburner M."/>
            <person name="Gelbart W.M."/>
            <person name="Rubin G.M."/>
            <person name="Lewis S.E."/>
        </authorList>
    </citation>
    <scope>GENOME REANNOTATION</scope>
    <source>
        <strain>Berkeley</strain>
    </source>
</reference>
<reference key="4">
    <citation type="journal article" date="2002" name="Genome Biol.">
        <title>A Drosophila full-length cDNA resource.</title>
        <authorList>
            <person name="Stapleton M."/>
            <person name="Carlson J.W."/>
            <person name="Brokstein P."/>
            <person name="Yu C."/>
            <person name="Champe M."/>
            <person name="George R.A."/>
            <person name="Guarin H."/>
            <person name="Kronmiller B."/>
            <person name="Pacleb J.M."/>
            <person name="Park S."/>
            <person name="Wan K.H."/>
            <person name="Rubin G.M."/>
            <person name="Celniker S.E."/>
        </authorList>
    </citation>
    <scope>NUCLEOTIDE SEQUENCE [LARGE SCALE MRNA]</scope>
    <source>
        <strain>Berkeley</strain>
        <tissue>Embryo</tissue>
    </source>
</reference>
<reference key="5">
    <citation type="submission" date="2003-02" db="EMBL/GenBank/DDBJ databases">
        <authorList>
            <person name="Stapleton M."/>
            <person name="Brokstein P."/>
            <person name="Hong L."/>
            <person name="Agbayani A."/>
            <person name="Carlson J.W."/>
            <person name="Champe M."/>
            <person name="Chavez C."/>
            <person name="Dorsett V."/>
            <person name="Dresnek D."/>
            <person name="Farfan D."/>
            <person name="Frise E."/>
            <person name="George R.A."/>
            <person name="Gonzalez M."/>
            <person name="Guarin H."/>
            <person name="Kronmiller B."/>
            <person name="Li P.W."/>
            <person name="Liao G."/>
            <person name="Miranda A."/>
            <person name="Mungall C.J."/>
            <person name="Nunoo J."/>
            <person name="Pacleb J.M."/>
            <person name="Paragas V."/>
            <person name="Park S."/>
            <person name="Patel S."/>
            <person name="Phouanenavong S."/>
            <person name="Wan K.H."/>
            <person name="Yu C."/>
            <person name="Lewis S.E."/>
            <person name="Rubin G.M."/>
            <person name="Celniker S.E."/>
        </authorList>
    </citation>
    <scope>NUCLEOTIDE SEQUENCE [LARGE SCALE MRNA]</scope>
    <source>
        <strain>Berkeley</strain>
        <tissue>Embryo</tissue>
    </source>
</reference>
<reference key="6">
    <citation type="journal article" date="2013" name="Nature">
        <title>Structures of the human and Drosophila 80S ribosome.</title>
        <authorList>
            <person name="Anger A.M."/>
            <person name="Armache J.P."/>
            <person name="Berninghausen O."/>
            <person name="Habeck M."/>
            <person name="Subklewe M."/>
            <person name="Wilson D.N."/>
            <person name="Beckmann R."/>
        </authorList>
    </citation>
    <scope>STRUCTURE BY ELECTRON MICROSCOPY (6.0 ANGSTROMS) OF THE 80S RIBOSOME</scope>
</reference>
<sequence length="218" mass="25528">MGRRPARCYRYCKNKPYPKSRFCRGVPDPKIRIFDLGRKKATVEDFPLCVHLVSDEYEQLSSEALEAGRICCNKYLVKYCGKDQFHIRMRLHPFHVIRINKMLSCAGADRLQTGMRGAFGKPQGTVARVRIGQPIMSVRSSDRYKAQVIEALRRAKFKFPGRQKIYVSKKWGFTKYERERYEELRDDNRLEPDGCNVKYRPEHGPIAAWEKAQRDVYA</sequence>
<name>RL10_DROME</name>
<accession>O61231</accession>
<accession>Q0E8B5</accession>
<accession>Q86NY2</accession>
<accession>Q9I813</accession>
<accession>Q9W5T1</accession>
<evidence type="ECO:0000250" key="1"/>
<evidence type="ECO:0000305" key="2"/>